<reference key="1">
    <citation type="journal article" date="2009" name="PLoS Genet.">
        <title>Organised genome dynamics in the Escherichia coli species results in highly diverse adaptive paths.</title>
        <authorList>
            <person name="Touchon M."/>
            <person name="Hoede C."/>
            <person name="Tenaillon O."/>
            <person name="Barbe V."/>
            <person name="Baeriswyl S."/>
            <person name="Bidet P."/>
            <person name="Bingen E."/>
            <person name="Bonacorsi S."/>
            <person name="Bouchier C."/>
            <person name="Bouvet O."/>
            <person name="Calteau A."/>
            <person name="Chiapello H."/>
            <person name="Clermont O."/>
            <person name="Cruveiller S."/>
            <person name="Danchin A."/>
            <person name="Diard M."/>
            <person name="Dossat C."/>
            <person name="Karoui M.E."/>
            <person name="Frapy E."/>
            <person name="Garry L."/>
            <person name="Ghigo J.M."/>
            <person name="Gilles A.M."/>
            <person name="Johnson J."/>
            <person name="Le Bouguenec C."/>
            <person name="Lescat M."/>
            <person name="Mangenot S."/>
            <person name="Martinez-Jehanne V."/>
            <person name="Matic I."/>
            <person name="Nassif X."/>
            <person name="Oztas S."/>
            <person name="Petit M.A."/>
            <person name="Pichon C."/>
            <person name="Rouy Z."/>
            <person name="Ruf C.S."/>
            <person name="Schneider D."/>
            <person name="Tourret J."/>
            <person name="Vacherie B."/>
            <person name="Vallenet D."/>
            <person name="Medigue C."/>
            <person name="Rocha E.P.C."/>
            <person name="Denamur E."/>
        </authorList>
    </citation>
    <scope>NUCLEOTIDE SEQUENCE [LARGE SCALE GENOMIC DNA]</scope>
    <source>
        <strain>S88 / ExPEC</strain>
    </source>
</reference>
<protein>
    <recommendedName>
        <fullName evidence="1">GTP 3',8-cyclase</fullName>
        <ecNumber evidence="1">4.1.99.22</ecNumber>
    </recommendedName>
    <alternativeName>
        <fullName evidence="1">Molybdenum cofactor biosynthesis protein A</fullName>
    </alternativeName>
</protein>
<feature type="chain" id="PRO_1000139318" description="GTP 3',8-cyclase">
    <location>
        <begin position="1"/>
        <end position="329"/>
    </location>
</feature>
<feature type="domain" description="Radical SAM core" evidence="2">
    <location>
        <begin position="8"/>
        <end position="234"/>
    </location>
</feature>
<feature type="binding site" evidence="1">
    <location>
        <position position="17"/>
    </location>
    <ligand>
        <name>GTP</name>
        <dbReference type="ChEBI" id="CHEBI:37565"/>
    </ligand>
</feature>
<feature type="binding site" evidence="1">
    <location>
        <position position="24"/>
    </location>
    <ligand>
        <name>[4Fe-4S] cluster</name>
        <dbReference type="ChEBI" id="CHEBI:49883"/>
        <label>1</label>
        <note>4Fe-4S-S-AdoMet</note>
    </ligand>
</feature>
<feature type="binding site" evidence="1">
    <location>
        <position position="28"/>
    </location>
    <ligand>
        <name>[4Fe-4S] cluster</name>
        <dbReference type="ChEBI" id="CHEBI:49883"/>
        <label>1</label>
        <note>4Fe-4S-S-AdoMet</note>
    </ligand>
</feature>
<feature type="binding site" evidence="1">
    <location>
        <position position="30"/>
    </location>
    <ligand>
        <name>S-adenosyl-L-methionine</name>
        <dbReference type="ChEBI" id="CHEBI:59789"/>
    </ligand>
</feature>
<feature type="binding site" evidence="1">
    <location>
        <position position="31"/>
    </location>
    <ligand>
        <name>[4Fe-4S] cluster</name>
        <dbReference type="ChEBI" id="CHEBI:49883"/>
        <label>1</label>
        <note>4Fe-4S-S-AdoMet</note>
    </ligand>
</feature>
<feature type="binding site" evidence="1">
    <location>
        <position position="68"/>
    </location>
    <ligand>
        <name>GTP</name>
        <dbReference type="ChEBI" id="CHEBI:37565"/>
    </ligand>
</feature>
<feature type="binding site" evidence="1">
    <location>
        <position position="72"/>
    </location>
    <ligand>
        <name>S-adenosyl-L-methionine</name>
        <dbReference type="ChEBI" id="CHEBI:59789"/>
    </ligand>
</feature>
<feature type="binding site" evidence="1">
    <location>
        <position position="99"/>
    </location>
    <ligand>
        <name>GTP</name>
        <dbReference type="ChEBI" id="CHEBI:37565"/>
    </ligand>
</feature>
<feature type="binding site" evidence="1">
    <location>
        <position position="123"/>
    </location>
    <ligand>
        <name>S-adenosyl-L-methionine</name>
        <dbReference type="ChEBI" id="CHEBI:59789"/>
    </ligand>
</feature>
<feature type="binding site" evidence="1">
    <location>
        <position position="160"/>
    </location>
    <ligand>
        <name>GTP</name>
        <dbReference type="ChEBI" id="CHEBI:37565"/>
    </ligand>
</feature>
<feature type="binding site" evidence="1">
    <location>
        <position position="194"/>
    </location>
    <ligand>
        <name>S-adenosyl-L-methionine</name>
        <dbReference type="ChEBI" id="CHEBI:59789"/>
    </ligand>
</feature>
<feature type="binding site" evidence="1">
    <location>
        <position position="257"/>
    </location>
    <ligand>
        <name>[4Fe-4S] cluster</name>
        <dbReference type="ChEBI" id="CHEBI:49883"/>
        <label>2</label>
        <note>4Fe-4S-substrate</note>
    </ligand>
</feature>
<feature type="binding site" evidence="1">
    <location>
        <position position="260"/>
    </location>
    <ligand>
        <name>[4Fe-4S] cluster</name>
        <dbReference type="ChEBI" id="CHEBI:49883"/>
        <label>2</label>
        <note>4Fe-4S-substrate</note>
    </ligand>
</feature>
<feature type="binding site" evidence="1">
    <location>
        <begin position="262"/>
        <end position="264"/>
    </location>
    <ligand>
        <name>GTP</name>
        <dbReference type="ChEBI" id="CHEBI:37565"/>
    </ligand>
</feature>
<feature type="binding site" evidence="1">
    <location>
        <position position="274"/>
    </location>
    <ligand>
        <name>[4Fe-4S] cluster</name>
        <dbReference type="ChEBI" id="CHEBI:49883"/>
        <label>2</label>
        <note>4Fe-4S-substrate</note>
    </ligand>
</feature>
<sequence>MASQLTDAFARKFYYLRLSITDVCNFRCTYCLPDGYKPSGVTNKGFLTVDEIRRVTRAFASLGTEKVRLTGGEPSLRRDFTDIIAAVRENDAIRQIAVTTNGYRLERDVANWRDAGLTGINVSVDSLDARQFHAITGQDKFNQVMAGIDAAFEAGFEKVKVNTVLMRDVNHHQLDTFLNWIQHRPIQLRFIELMETGEGIELFRKHHISGQVLRNELLRRGWIHQLRQRSDGPAQVFCHPDYAGEIGLIMPYEKDFCATCNRLRVSSIGKLHLCLFGEGGVNLRDLLEDDTQQQALEARISAALREKKQTHFLHQNNTGITQNLSYIGG</sequence>
<accession>B7MGN9</accession>
<evidence type="ECO:0000255" key="1">
    <source>
        <dbReference type="HAMAP-Rule" id="MF_01225"/>
    </source>
</evidence>
<evidence type="ECO:0000255" key="2">
    <source>
        <dbReference type="PROSITE-ProRule" id="PRU01266"/>
    </source>
</evidence>
<keyword id="KW-0004">4Fe-4S</keyword>
<keyword id="KW-0342">GTP-binding</keyword>
<keyword id="KW-0408">Iron</keyword>
<keyword id="KW-0411">Iron-sulfur</keyword>
<keyword id="KW-0456">Lyase</keyword>
<keyword id="KW-0479">Metal-binding</keyword>
<keyword id="KW-0501">Molybdenum cofactor biosynthesis</keyword>
<keyword id="KW-0547">Nucleotide-binding</keyword>
<keyword id="KW-1185">Reference proteome</keyword>
<keyword id="KW-0949">S-adenosyl-L-methionine</keyword>
<gene>
    <name evidence="1" type="primary">moaA</name>
    <name type="ordered locus">ECS88_0798</name>
</gene>
<proteinExistence type="inferred from homology"/>
<dbReference type="EC" id="4.1.99.22" evidence="1"/>
<dbReference type="EMBL" id="CU928161">
    <property type="protein sequence ID" value="CAR02137.1"/>
    <property type="molecule type" value="Genomic_DNA"/>
</dbReference>
<dbReference type="RefSeq" id="WP_001350602.1">
    <property type="nucleotide sequence ID" value="NC_011742.1"/>
</dbReference>
<dbReference type="SMR" id="B7MGN9"/>
<dbReference type="KEGG" id="ecz:ECS88_0798"/>
<dbReference type="HOGENOM" id="CLU_009273_0_1_6"/>
<dbReference type="UniPathway" id="UPA00344"/>
<dbReference type="Proteomes" id="UP000000747">
    <property type="component" value="Chromosome"/>
</dbReference>
<dbReference type="GO" id="GO:0051539">
    <property type="term" value="F:4 iron, 4 sulfur cluster binding"/>
    <property type="evidence" value="ECO:0007669"/>
    <property type="project" value="UniProtKB-UniRule"/>
</dbReference>
<dbReference type="GO" id="GO:0061799">
    <property type="term" value="F:cyclic pyranopterin monophosphate synthase activity"/>
    <property type="evidence" value="ECO:0007669"/>
    <property type="project" value="TreeGrafter"/>
</dbReference>
<dbReference type="GO" id="GO:0061798">
    <property type="term" value="F:GTP 3',8'-cyclase activity"/>
    <property type="evidence" value="ECO:0007669"/>
    <property type="project" value="UniProtKB-UniRule"/>
</dbReference>
<dbReference type="GO" id="GO:0005525">
    <property type="term" value="F:GTP binding"/>
    <property type="evidence" value="ECO:0007669"/>
    <property type="project" value="UniProtKB-UniRule"/>
</dbReference>
<dbReference type="GO" id="GO:0046872">
    <property type="term" value="F:metal ion binding"/>
    <property type="evidence" value="ECO:0007669"/>
    <property type="project" value="UniProtKB-KW"/>
</dbReference>
<dbReference type="GO" id="GO:1904047">
    <property type="term" value="F:S-adenosyl-L-methionine binding"/>
    <property type="evidence" value="ECO:0007669"/>
    <property type="project" value="UniProtKB-UniRule"/>
</dbReference>
<dbReference type="GO" id="GO:0006777">
    <property type="term" value="P:Mo-molybdopterin cofactor biosynthetic process"/>
    <property type="evidence" value="ECO:0007669"/>
    <property type="project" value="UniProtKB-UniRule"/>
</dbReference>
<dbReference type="CDD" id="cd01335">
    <property type="entry name" value="Radical_SAM"/>
    <property type="match status" value="1"/>
</dbReference>
<dbReference type="CDD" id="cd21117">
    <property type="entry name" value="Twitch_MoaA"/>
    <property type="match status" value="1"/>
</dbReference>
<dbReference type="FunFam" id="3.20.20.70:FF:000057">
    <property type="entry name" value="GTP 3',8-cyclase"/>
    <property type="match status" value="1"/>
</dbReference>
<dbReference type="Gene3D" id="3.20.20.70">
    <property type="entry name" value="Aldolase class I"/>
    <property type="match status" value="1"/>
</dbReference>
<dbReference type="HAMAP" id="MF_01225_B">
    <property type="entry name" value="MoaA_B"/>
    <property type="match status" value="1"/>
</dbReference>
<dbReference type="InterPro" id="IPR013785">
    <property type="entry name" value="Aldolase_TIM"/>
</dbReference>
<dbReference type="InterPro" id="IPR006638">
    <property type="entry name" value="Elp3/MiaA/NifB-like_rSAM"/>
</dbReference>
<dbReference type="InterPro" id="IPR013483">
    <property type="entry name" value="MoaA"/>
</dbReference>
<dbReference type="InterPro" id="IPR000385">
    <property type="entry name" value="MoaA_NifB_PqqE_Fe-S-bd_CS"/>
</dbReference>
<dbReference type="InterPro" id="IPR010505">
    <property type="entry name" value="MoaA_twitch"/>
</dbReference>
<dbReference type="InterPro" id="IPR050105">
    <property type="entry name" value="MoCo_biosynth_MoaA/MoaC"/>
</dbReference>
<dbReference type="InterPro" id="IPR007197">
    <property type="entry name" value="rSAM"/>
</dbReference>
<dbReference type="NCBIfam" id="TIGR02666">
    <property type="entry name" value="moaA"/>
    <property type="match status" value="1"/>
</dbReference>
<dbReference type="PANTHER" id="PTHR22960:SF28">
    <property type="entry name" value="GTP 3',8-CYCLASE"/>
    <property type="match status" value="1"/>
</dbReference>
<dbReference type="PANTHER" id="PTHR22960">
    <property type="entry name" value="MOLYBDOPTERIN COFACTOR SYNTHESIS PROTEIN A"/>
    <property type="match status" value="1"/>
</dbReference>
<dbReference type="Pfam" id="PF13353">
    <property type="entry name" value="Fer4_12"/>
    <property type="match status" value="1"/>
</dbReference>
<dbReference type="Pfam" id="PF06463">
    <property type="entry name" value="Mob_synth_C"/>
    <property type="match status" value="1"/>
</dbReference>
<dbReference type="Pfam" id="PF04055">
    <property type="entry name" value="Radical_SAM"/>
    <property type="match status" value="1"/>
</dbReference>
<dbReference type="SFLD" id="SFLDG01383">
    <property type="entry name" value="cyclic_pyranopterin_phosphate"/>
    <property type="match status" value="1"/>
</dbReference>
<dbReference type="SFLD" id="SFLDG01386">
    <property type="entry name" value="main_SPASM_domain-containing"/>
    <property type="match status" value="1"/>
</dbReference>
<dbReference type="SMART" id="SM00729">
    <property type="entry name" value="Elp3"/>
    <property type="match status" value="1"/>
</dbReference>
<dbReference type="SUPFAM" id="SSF102114">
    <property type="entry name" value="Radical SAM enzymes"/>
    <property type="match status" value="1"/>
</dbReference>
<dbReference type="PROSITE" id="PS01305">
    <property type="entry name" value="MOAA_NIFB_PQQE"/>
    <property type="match status" value="1"/>
</dbReference>
<dbReference type="PROSITE" id="PS51918">
    <property type="entry name" value="RADICAL_SAM"/>
    <property type="match status" value="1"/>
</dbReference>
<comment type="function">
    <text evidence="1">Catalyzes the cyclization of GTP to (8S)-3',8-cyclo-7,8-dihydroguanosine 5'-triphosphate.</text>
</comment>
<comment type="catalytic activity">
    <reaction evidence="1">
        <text>GTP + AH2 + S-adenosyl-L-methionine = (8S)-3',8-cyclo-7,8-dihydroguanosine 5'-triphosphate + 5'-deoxyadenosine + L-methionine + A + H(+)</text>
        <dbReference type="Rhea" id="RHEA:49576"/>
        <dbReference type="ChEBI" id="CHEBI:13193"/>
        <dbReference type="ChEBI" id="CHEBI:15378"/>
        <dbReference type="ChEBI" id="CHEBI:17319"/>
        <dbReference type="ChEBI" id="CHEBI:17499"/>
        <dbReference type="ChEBI" id="CHEBI:37565"/>
        <dbReference type="ChEBI" id="CHEBI:57844"/>
        <dbReference type="ChEBI" id="CHEBI:59789"/>
        <dbReference type="ChEBI" id="CHEBI:131766"/>
        <dbReference type="EC" id="4.1.99.22"/>
    </reaction>
</comment>
<comment type="cofactor">
    <cofactor evidence="1">
        <name>[4Fe-4S] cluster</name>
        <dbReference type="ChEBI" id="CHEBI:49883"/>
    </cofactor>
    <text evidence="1">Binds 2 [4Fe-4S] clusters. Binds 1 [4Fe-4S] cluster coordinated with 3 cysteines and an exchangeable S-adenosyl-L-methionine and 1 [4Fe-4S] cluster coordinated with 3 cysteines and the GTP-derived substrate.</text>
</comment>
<comment type="pathway">
    <text evidence="1">Cofactor biosynthesis; molybdopterin biosynthesis.</text>
</comment>
<comment type="subunit">
    <text evidence="1">Monomer and homodimer.</text>
</comment>
<comment type="similarity">
    <text evidence="1">Belongs to the radical SAM superfamily. MoaA family.</text>
</comment>
<name>MOAA_ECO45</name>
<organism>
    <name type="scientific">Escherichia coli O45:K1 (strain S88 / ExPEC)</name>
    <dbReference type="NCBI Taxonomy" id="585035"/>
    <lineage>
        <taxon>Bacteria</taxon>
        <taxon>Pseudomonadati</taxon>
        <taxon>Pseudomonadota</taxon>
        <taxon>Gammaproteobacteria</taxon>
        <taxon>Enterobacterales</taxon>
        <taxon>Enterobacteriaceae</taxon>
        <taxon>Escherichia</taxon>
    </lineage>
</organism>